<feature type="chain" id="PRO_0000098599" description="Isoleucine--tRNA ligase, cytoplasmic">
    <location>
        <begin position="1"/>
        <end position="1141"/>
    </location>
</feature>
<feature type="short sequence motif" description="'HIGH' region">
    <location>
        <begin position="50"/>
        <end position="60"/>
    </location>
</feature>
<feature type="short sequence motif" description="'KMSKS' region">
    <location>
        <begin position="601"/>
        <end position="605"/>
    </location>
</feature>
<feature type="binding site" evidence="1">
    <location>
        <position position="604"/>
    </location>
    <ligand>
        <name>ATP</name>
        <dbReference type="ChEBI" id="CHEBI:30616"/>
    </ligand>
</feature>
<evidence type="ECO:0000250" key="1"/>
<evidence type="ECO:0000305" key="2"/>
<evidence type="ECO:0000312" key="3">
    <source>
        <dbReference type="WormBase" id="R11A8.6"/>
    </source>
</evidence>
<proteinExistence type="inferred from homology"/>
<protein>
    <recommendedName>
        <fullName>Isoleucine--tRNA ligase, cytoplasmic</fullName>
        <ecNumber>6.1.1.5</ecNumber>
    </recommendedName>
    <alternativeName>
        <fullName>Isoleucyl-tRNA synthetase</fullName>
        <shortName>IleRS</shortName>
    </alternativeName>
</protein>
<reference key="1">
    <citation type="journal article" date="1998" name="Science">
        <title>Genome sequence of the nematode C. elegans: a platform for investigating biology.</title>
        <authorList>
            <consortium name="The C. elegans sequencing consortium"/>
        </authorList>
    </citation>
    <scope>NUCLEOTIDE SEQUENCE [LARGE SCALE GENOMIC DNA]</scope>
    <source>
        <strain>Bristol N2</strain>
    </source>
</reference>
<sequence length="1141" mass="130012">MSGLSTVPDNINFAREEDKVAQKWQDENTFQRSVELSKDRPHFTFYDGPPFATGLPHYGHMLTSTIKDVVGRWAHQNGHYVERRFGWDTHGLPVEYEIDKTLGISGPQDVMKMGIANYNNECRKIVMRYSGEWEKTMGRLGRWVDFKHDYKTLYPWFMESVWWAFSELHKKGLVYKGVKVMPFSTACSTPLSNFEAGQNYKDVVDPAVFVGFKLLDCPNRQLVAWTTTPWTLPSNLALVVHPDMLYVVTKDKTTGIEYVVLEERLGELKNDNLEVIEKLAGSQLKDLRYEPLFPYFAYMREERNAFRVLNDTFVTSDSGTGVVHQAPYFGEIDFQVCVANGVIAKDQKMICPVDESGKYTSEVPDYQGVYVKDADKLIIKRLKEMGNLVRQAEVKHSYPFCWRSDTPLLYKAVPSWFINVETLIPRLLANNDETYWVPAFVKEKRFANWLRDARDWAVSRNRFWGTPINLWVSEDGEEVVCVGSIAELEELSGQKITDLHRESVDDVTIPSRSGRGVLKRVSEVFDCWFESGSMPYAQNHYPFENRKIFEDNFPADFIAEGIDQTRGWFYTLLVLSTALFNKPPFKNLICNGLVLASDGAKMSKSKKNYPDPMLIVNKYGADALRLYLINSPVVRGENLRFREEGVRDLLKDVFLPWFNAYRFFVQNVQAYEHETGNVFDMNVHVASENVMDRWIESFTNSLVAFVRKEMDSYRLYAVVGPLTKFFDTLTNIYIRLNRKRVKGDNGLHEQHHALAALGRVLILIVRLMAPFTPFFCEYIWLNLKKVIGSTEESVHFLMLPKPDESLIDETVERRVEVMRNVIDLVRLVRDREGLAVKYPLKEMIVINRDSQFLEDVKSLESYILLELNVRKLTVSQDKQKYGITLKAEPNFKILGARLKGEQKKVADYLKNQITESELEKFLLEGKLTVLGHELSSEEVAVSYAAGSDQGHGYKTHSDAKTIVMIDTTEDESLIEEGLCREVTNRVQRLRKQAKLVSTDTAHVHIVVSPADSQLAKVVAAKLNDIVSATGTPIKLGSPPAAAKAPTATSKSAIKDSEVELWLFAEGDSFDGITVVDGSKKVRVHVKTEKEHLKGYADLLYHVRSALDLWNGKIALKNVDGSAVHPTVDVTSLVGQTLQLVR</sequence>
<name>SYIC_CAEEL</name>
<organism>
    <name type="scientific">Caenorhabditis elegans</name>
    <dbReference type="NCBI Taxonomy" id="6239"/>
    <lineage>
        <taxon>Eukaryota</taxon>
        <taxon>Metazoa</taxon>
        <taxon>Ecdysozoa</taxon>
        <taxon>Nematoda</taxon>
        <taxon>Chromadorea</taxon>
        <taxon>Rhabditida</taxon>
        <taxon>Rhabditina</taxon>
        <taxon>Rhabditomorpha</taxon>
        <taxon>Rhabditoidea</taxon>
        <taxon>Rhabditidae</taxon>
        <taxon>Peloderinae</taxon>
        <taxon>Caenorhabditis</taxon>
    </lineage>
</organism>
<keyword id="KW-0030">Aminoacyl-tRNA synthetase</keyword>
<keyword id="KW-0067">ATP-binding</keyword>
<keyword id="KW-0963">Cytoplasm</keyword>
<keyword id="KW-0436">Ligase</keyword>
<keyword id="KW-0547">Nucleotide-binding</keyword>
<keyword id="KW-0648">Protein biosynthesis</keyword>
<keyword id="KW-1185">Reference proteome</keyword>
<gene>
    <name evidence="3" type="primary">iars-1</name>
    <name evidence="3" type="synonym">irs-1</name>
    <name evidence="3" type="ORF">R11A8.6</name>
</gene>
<accession>Q21926</accession>
<dbReference type="EC" id="6.1.1.5"/>
<dbReference type="EMBL" id="Z70310">
    <property type="protein sequence ID" value="CAA94369.1"/>
    <property type="molecule type" value="Genomic_DNA"/>
</dbReference>
<dbReference type="PIR" id="T24176">
    <property type="entry name" value="T24176"/>
</dbReference>
<dbReference type="RefSeq" id="NP_001366774.1">
    <property type="nucleotide sequence ID" value="NM_001380444.3"/>
</dbReference>
<dbReference type="RefSeq" id="NP_501914.1">
    <property type="nucleotide sequence ID" value="NM_069513.4"/>
</dbReference>
<dbReference type="SMR" id="Q21926"/>
<dbReference type="BioGRID" id="43028">
    <property type="interactions" value="18"/>
</dbReference>
<dbReference type="FunCoup" id="Q21926">
    <property type="interactions" value="2915"/>
</dbReference>
<dbReference type="IntAct" id="Q21926">
    <property type="interactions" value="1"/>
</dbReference>
<dbReference type="MINT" id="Q21926"/>
<dbReference type="STRING" id="6239.R11A8.6.2"/>
<dbReference type="PaxDb" id="6239-R11A8.6.1"/>
<dbReference type="PeptideAtlas" id="Q21926"/>
<dbReference type="EnsemblMetazoa" id="R11A8.6.1">
    <property type="protein sequence ID" value="R11A8.6.1"/>
    <property type="gene ID" value="WBGene00002152"/>
</dbReference>
<dbReference type="EnsemblMetazoa" id="R11A8.6.2">
    <property type="protein sequence ID" value="R11A8.6.2"/>
    <property type="gene ID" value="WBGene00002152"/>
</dbReference>
<dbReference type="GeneID" id="177926"/>
<dbReference type="UCSC" id="R11A8.6">
    <property type="organism name" value="c. elegans"/>
</dbReference>
<dbReference type="AGR" id="WB:WBGene00002152"/>
<dbReference type="WormBase" id="R11A8.6">
    <property type="protein sequence ID" value="CE06304"/>
    <property type="gene ID" value="WBGene00002152"/>
    <property type="gene designation" value="iars-1"/>
</dbReference>
<dbReference type="eggNOG" id="KOG0434">
    <property type="taxonomic scope" value="Eukaryota"/>
</dbReference>
<dbReference type="GeneTree" id="ENSGT00550000074921"/>
<dbReference type="HOGENOM" id="CLU_001493_1_1_1"/>
<dbReference type="InParanoid" id="Q21926"/>
<dbReference type="OMA" id="EIIVIHK"/>
<dbReference type="OrthoDB" id="1706657at2759"/>
<dbReference type="PhylomeDB" id="Q21926"/>
<dbReference type="PRO" id="PR:Q21926"/>
<dbReference type="Proteomes" id="UP000001940">
    <property type="component" value="Chromosome IV"/>
</dbReference>
<dbReference type="Bgee" id="WBGene00002152">
    <property type="expression patterns" value="Expressed in germ line (C elegans) and 4 other cell types or tissues"/>
</dbReference>
<dbReference type="GO" id="GO:0005737">
    <property type="term" value="C:cytoplasm"/>
    <property type="evidence" value="ECO:0007669"/>
    <property type="project" value="UniProtKB-SubCell"/>
</dbReference>
<dbReference type="GO" id="GO:0002161">
    <property type="term" value="F:aminoacyl-tRNA deacylase activity"/>
    <property type="evidence" value="ECO:0007669"/>
    <property type="project" value="InterPro"/>
</dbReference>
<dbReference type="GO" id="GO:0005524">
    <property type="term" value="F:ATP binding"/>
    <property type="evidence" value="ECO:0007669"/>
    <property type="project" value="UniProtKB-KW"/>
</dbReference>
<dbReference type="GO" id="GO:0004822">
    <property type="term" value="F:isoleucine-tRNA ligase activity"/>
    <property type="evidence" value="ECO:0000318"/>
    <property type="project" value="GO_Central"/>
</dbReference>
<dbReference type="GO" id="GO:0000049">
    <property type="term" value="F:tRNA binding"/>
    <property type="evidence" value="ECO:0007669"/>
    <property type="project" value="InterPro"/>
</dbReference>
<dbReference type="GO" id="GO:0006428">
    <property type="term" value="P:isoleucyl-tRNA aminoacylation"/>
    <property type="evidence" value="ECO:0000318"/>
    <property type="project" value="GO_Central"/>
</dbReference>
<dbReference type="CDD" id="cd07961">
    <property type="entry name" value="Anticodon_Ia_Ile_ABEc"/>
    <property type="match status" value="1"/>
</dbReference>
<dbReference type="CDD" id="cd00818">
    <property type="entry name" value="IleRS_core"/>
    <property type="match status" value="1"/>
</dbReference>
<dbReference type="FunFam" id="1.10.730.10:FF:000073">
    <property type="entry name" value="Isoleucine--tRNA ligase, cytoplasmic"/>
    <property type="match status" value="1"/>
</dbReference>
<dbReference type="FunFam" id="3.40.50.620:FF:000023">
    <property type="entry name" value="Isoleucyl-tRNA synthetase,cytoplasmic"/>
    <property type="match status" value="1"/>
</dbReference>
<dbReference type="FunFam" id="3.40.50.620:FF:000050">
    <property type="entry name" value="Isoleucyl-tRNA synthetase,cytoplasmic"/>
    <property type="match status" value="1"/>
</dbReference>
<dbReference type="Gene3D" id="3.40.50.620">
    <property type="entry name" value="HUPs"/>
    <property type="match status" value="2"/>
</dbReference>
<dbReference type="Gene3D" id="1.10.730.10">
    <property type="entry name" value="Isoleucyl-tRNA Synthetase, Domain 1"/>
    <property type="match status" value="1"/>
</dbReference>
<dbReference type="HAMAP" id="MF_02003">
    <property type="entry name" value="Ile_tRNA_synth_type2"/>
    <property type="match status" value="1"/>
</dbReference>
<dbReference type="InterPro" id="IPR001412">
    <property type="entry name" value="aa-tRNA-synth_I_CS"/>
</dbReference>
<dbReference type="InterPro" id="IPR002300">
    <property type="entry name" value="aa-tRNA-synth_Ia"/>
</dbReference>
<dbReference type="InterPro" id="IPR033709">
    <property type="entry name" value="Anticodon_Ile_ABEc"/>
</dbReference>
<dbReference type="InterPro" id="IPR002301">
    <property type="entry name" value="Ile-tRNA-ligase"/>
</dbReference>
<dbReference type="InterPro" id="IPR023586">
    <property type="entry name" value="Ile-tRNA-ligase_type2"/>
</dbReference>
<dbReference type="InterPro" id="IPR013155">
    <property type="entry name" value="M/V/L/I-tRNA-synth_anticd-bd"/>
</dbReference>
<dbReference type="InterPro" id="IPR014729">
    <property type="entry name" value="Rossmann-like_a/b/a_fold"/>
</dbReference>
<dbReference type="InterPro" id="IPR009080">
    <property type="entry name" value="tRNAsynth_Ia_anticodon-bd"/>
</dbReference>
<dbReference type="InterPro" id="IPR009008">
    <property type="entry name" value="Val/Leu/Ile-tRNA-synth_edit"/>
</dbReference>
<dbReference type="NCBIfam" id="TIGR00392">
    <property type="entry name" value="ileS"/>
    <property type="match status" value="1"/>
</dbReference>
<dbReference type="PANTHER" id="PTHR42780:SF1">
    <property type="entry name" value="ISOLEUCINE--TRNA LIGASE, CYTOPLASMIC"/>
    <property type="match status" value="1"/>
</dbReference>
<dbReference type="PANTHER" id="PTHR42780">
    <property type="entry name" value="SOLEUCYL-TRNA SYNTHETASE"/>
    <property type="match status" value="1"/>
</dbReference>
<dbReference type="Pfam" id="PF08264">
    <property type="entry name" value="Anticodon_1"/>
    <property type="match status" value="1"/>
</dbReference>
<dbReference type="Pfam" id="PF19302">
    <property type="entry name" value="DUF5915"/>
    <property type="match status" value="1"/>
</dbReference>
<dbReference type="Pfam" id="PF00133">
    <property type="entry name" value="tRNA-synt_1"/>
    <property type="match status" value="1"/>
</dbReference>
<dbReference type="PRINTS" id="PR00984">
    <property type="entry name" value="TRNASYNTHILE"/>
</dbReference>
<dbReference type="SUPFAM" id="SSF47323">
    <property type="entry name" value="Anticodon-binding domain of a subclass of class I aminoacyl-tRNA synthetases"/>
    <property type="match status" value="1"/>
</dbReference>
<dbReference type="SUPFAM" id="SSF52374">
    <property type="entry name" value="Nucleotidylyl transferase"/>
    <property type="match status" value="1"/>
</dbReference>
<dbReference type="SUPFAM" id="SSF50677">
    <property type="entry name" value="ValRS/IleRS/LeuRS editing domain"/>
    <property type="match status" value="1"/>
</dbReference>
<dbReference type="PROSITE" id="PS00178">
    <property type="entry name" value="AA_TRNA_LIGASE_I"/>
    <property type="match status" value="1"/>
</dbReference>
<comment type="catalytic activity">
    <reaction>
        <text>tRNA(Ile) + L-isoleucine + ATP = L-isoleucyl-tRNA(Ile) + AMP + diphosphate</text>
        <dbReference type="Rhea" id="RHEA:11060"/>
        <dbReference type="Rhea" id="RHEA-COMP:9666"/>
        <dbReference type="Rhea" id="RHEA-COMP:9695"/>
        <dbReference type="ChEBI" id="CHEBI:30616"/>
        <dbReference type="ChEBI" id="CHEBI:33019"/>
        <dbReference type="ChEBI" id="CHEBI:58045"/>
        <dbReference type="ChEBI" id="CHEBI:78442"/>
        <dbReference type="ChEBI" id="CHEBI:78528"/>
        <dbReference type="ChEBI" id="CHEBI:456215"/>
        <dbReference type="EC" id="6.1.1.5"/>
    </reaction>
</comment>
<comment type="subcellular location">
    <subcellularLocation>
        <location>Cytoplasm</location>
    </subcellularLocation>
</comment>
<comment type="similarity">
    <text evidence="2">Belongs to the class-I aminoacyl-tRNA synthetase family.</text>
</comment>